<feature type="chain" id="PRO_0000351918" description="Protein-L-isoaspartate O-methyltransferase">
    <location>
        <begin position="1"/>
        <end position="297"/>
    </location>
</feature>
<feature type="region of interest" description="Disordered" evidence="2">
    <location>
        <begin position="20"/>
        <end position="57"/>
    </location>
</feature>
<feature type="compositionally biased region" description="Low complexity" evidence="2">
    <location>
        <begin position="28"/>
        <end position="43"/>
    </location>
</feature>
<feature type="active site" evidence="1">
    <location>
        <position position="133"/>
    </location>
</feature>
<evidence type="ECO:0000255" key="1">
    <source>
        <dbReference type="HAMAP-Rule" id="MF_00090"/>
    </source>
</evidence>
<evidence type="ECO:0000256" key="2">
    <source>
        <dbReference type="SAM" id="MobiDB-lite"/>
    </source>
</evidence>
<reference key="1">
    <citation type="journal article" date="2010" name="PLoS ONE">
        <title>The complete multipartite genome sequence of Cupriavidus necator JMP134, a versatile pollutant degrader.</title>
        <authorList>
            <person name="Lykidis A."/>
            <person name="Perez-Pantoja D."/>
            <person name="Ledger T."/>
            <person name="Mavromatis K."/>
            <person name="Anderson I.J."/>
            <person name="Ivanova N.N."/>
            <person name="Hooper S.D."/>
            <person name="Lapidus A."/>
            <person name="Lucas S."/>
            <person name="Gonzalez B."/>
            <person name="Kyrpides N.C."/>
        </authorList>
    </citation>
    <scope>NUCLEOTIDE SEQUENCE [LARGE SCALE GENOMIC DNA]</scope>
    <source>
        <strain>JMP134 / LMG 1197</strain>
    </source>
</reference>
<sequence length="297" mass="31010">MSPTPPRSKFPLPLDAVVQRKPAPARTAGMPAVGAPGPAQAQAKARDKQPSAPTAAASAVEARASAATAGGGGMASDRARGALAARLRASGIRDERVLAAIGTVPRHLFVEPGLASQAYEDAALPIGHQQTISKPSVVARMIELLREGLSADTPVERVLEIGTGCGYQAAVLSLVAREVFSIERIRPLHEQAKANLRPLRVPNLRLHYGDGMLGLPQAAPFSAIILAAAGMEVPQALLEQLAIGGRLIAPVAVVPPAGGSGQTVTQQLLLIERLNRHRFHRTALEAVFFVPLKSGTI</sequence>
<dbReference type="EC" id="2.1.1.77" evidence="1"/>
<dbReference type="EMBL" id="CP000090">
    <property type="protein sequence ID" value="AAZ61461.1"/>
    <property type="molecule type" value="Genomic_DNA"/>
</dbReference>
<dbReference type="SMR" id="Q46ZH2"/>
<dbReference type="STRING" id="264198.Reut_A2097"/>
<dbReference type="KEGG" id="reu:Reut_A2097"/>
<dbReference type="eggNOG" id="COG2518">
    <property type="taxonomic scope" value="Bacteria"/>
</dbReference>
<dbReference type="HOGENOM" id="CLU_055432_1_0_4"/>
<dbReference type="OrthoDB" id="9810066at2"/>
<dbReference type="GO" id="GO:0005737">
    <property type="term" value="C:cytoplasm"/>
    <property type="evidence" value="ECO:0007669"/>
    <property type="project" value="UniProtKB-SubCell"/>
</dbReference>
<dbReference type="GO" id="GO:0004719">
    <property type="term" value="F:protein-L-isoaspartate (D-aspartate) O-methyltransferase activity"/>
    <property type="evidence" value="ECO:0007669"/>
    <property type="project" value="UniProtKB-UniRule"/>
</dbReference>
<dbReference type="GO" id="GO:0032259">
    <property type="term" value="P:methylation"/>
    <property type="evidence" value="ECO:0007669"/>
    <property type="project" value="UniProtKB-KW"/>
</dbReference>
<dbReference type="GO" id="GO:0036211">
    <property type="term" value="P:protein modification process"/>
    <property type="evidence" value="ECO:0007669"/>
    <property type="project" value="UniProtKB-UniRule"/>
</dbReference>
<dbReference type="GO" id="GO:0030091">
    <property type="term" value="P:protein repair"/>
    <property type="evidence" value="ECO:0007669"/>
    <property type="project" value="UniProtKB-UniRule"/>
</dbReference>
<dbReference type="CDD" id="cd02440">
    <property type="entry name" value="AdoMet_MTases"/>
    <property type="match status" value="1"/>
</dbReference>
<dbReference type="FunFam" id="3.40.50.150:FF:000010">
    <property type="entry name" value="Protein-L-isoaspartate O-methyltransferase"/>
    <property type="match status" value="1"/>
</dbReference>
<dbReference type="Gene3D" id="3.40.50.150">
    <property type="entry name" value="Vaccinia Virus protein VP39"/>
    <property type="match status" value="1"/>
</dbReference>
<dbReference type="HAMAP" id="MF_00090">
    <property type="entry name" value="PIMT"/>
    <property type="match status" value="1"/>
</dbReference>
<dbReference type="InterPro" id="IPR000682">
    <property type="entry name" value="PCMT"/>
</dbReference>
<dbReference type="InterPro" id="IPR029063">
    <property type="entry name" value="SAM-dependent_MTases_sf"/>
</dbReference>
<dbReference type="NCBIfam" id="TIGR00080">
    <property type="entry name" value="pimt"/>
    <property type="match status" value="1"/>
</dbReference>
<dbReference type="NCBIfam" id="NF001453">
    <property type="entry name" value="PRK00312.1"/>
    <property type="match status" value="1"/>
</dbReference>
<dbReference type="PANTHER" id="PTHR11579">
    <property type="entry name" value="PROTEIN-L-ISOASPARTATE O-METHYLTRANSFERASE"/>
    <property type="match status" value="1"/>
</dbReference>
<dbReference type="PANTHER" id="PTHR11579:SF0">
    <property type="entry name" value="PROTEIN-L-ISOASPARTATE(D-ASPARTATE) O-METHYLTRANSFERASE"/>
    <property type="match status" value="1"/>
</dbReference>
<dbReference type="Pfam" id="PF01135">
    <property type="entry name" value="PCMT"/>
    <property type="match status" value="1"/>
</dbReference>
<dbReference type="SUPFAM" id="SSF53335">
    <property type="entry name" value="S-adenosyl-L-methionine-dependent methyltransferases"/>
    <property type="match status" value="1"/>
</dbReference>
<dbReference type="PROSITE" id="PS01279">
    <property type="entry name" value="PCMT"/>
    <property type="match status" value="1"/>
</dbReference>
<comment type="function">
    <text evidence="1">Catalyzes the methyl esterification of L-isoaspartyl residues in peptides and proteins that result from spontaneous decomposition of normal L-aspartyl and L-asparaginyl residues. It plays a role in the repair and/or degradation of damaged proteins.</text>
</comment>
<comment type="catalytic activity">
    <reaction evidence="1">
        <text>[protein]-L-isoaspartate + S-adenosyl-L-methionine = [protein]-L-isoaspartate alpha-methyl ester + S-adenosyl-L-homocysteine</text>
        <dbReference type="Rhea" id="RHEA:12705"/>
        <dbReference type="Rhea" id="RHEA-COMP:12143"/>
        <dbReference type="Rhea" id="RHEA-COMP:12144"/>
        <dbReference type="ChEBI" id="CHEBI:57856"/>
        <dbReference type="ChEBI" id="CHEBI:59789"/>
        <dbReference type="ChEBI" id="CHEBI:90596"/>
        <dbReference type="ChEBI" id="CHEBI:90598"/>
        <dbReference type="EC" id="2.1.1.77"/>
    </reaction>
</comment>
<comment type="subcellular location">
    <subcellularLocation>
        <location evidence="1">Cytoplasm</location>
    </subcellularLocation>
</comment>
<comment type="similarity">
    <text evidence="1">Belongs to the methyltransferase superfamily. L-isoaspartyl/D-aspartyl protein methyltransferase family.</text>
</comment>
<protein>
    <recommendedName>
        <fullName evidence="1">Protein-L-isoaspartate O-methyltransferase</fullName>
        <ecNumber evidence="1">2.1.1.77</ecNumber>
    </recommendedName>
    <alternativeName>
        <fullName evidence="1">L-isoaspartyl protein carboxyl methyltransferase</fullName>
    </alternativeName>
    <alternativeName>
        <fullName evidence="1">Protein L-isoaspartyl methyltransferase</fullName>
    </alternativeName>
    <alternativeName>
        <fullName evidence="1">Protein-beta-aspartate methyltransferase</fullName>
        <shortName evidence="1">PIMT</shortName>
    </alternativeName>
</protein>
<proteinExistence type="inferred from homology"/>
<keyword id="KW-0963">Cytoplasm</keyword>
<keyword id="KW-0489">Methyltransferase</keyword>
<keyword id="KW-0949">S-adenosyl-L-methionine</keyword>
<keyword id="KW-0808">Transferase</keyword>
<name>PIMT_CUPPJ</name>
<accession>Q46ZH2</accession>
<gene>
    <name evidence="1" type="primary">pcm</name>
    <name type="ordered locus">Reut_A2097</name>
</gene>
<organism>
    <name type="scientific">Cupriavidus pinatubonensis (strain JMP 134 / LMG 1197)</name>
    <name type="common">Cupriavidus necator (strain JMP 134)</name>
    <dbReference type="NCBI Taxonomy" id="264198"/>
    <lineage>
        <taxon>Bacteria</taxon>
        <taxon>Pseudomonadati</taxon>
        <taxon>Pseudomonadota</taxon>
        <taxon>Betaproteobacteria</taxon>
        <taxon>Burkholderiales</taxon>
        <taxon>Burkholderiaceae</taxon>
        <taxon>Cupriavidus</taxon>
    </lineage>
</organism>